<keyword id="KW-0025">Alternative splicing</keyword>
<keyword id="KW-0067">ATP-binding</keyword>
<keyword id="KW-0152">Cholesterol biosynthesis</keyword>
<keyword id="KW-0153">Cholesterol metabolism</keyword>
<keyword id="KW-0963">Cytoplasm</keyword>
<keyword id="KW-0418">Kinase</keyword>
<keyword id="KW-0444">Lipid biosynthesis</keyword>
<keyword id="KW-0443">Lipid metabolism</keyword>
<keyword id="KW-0547">Nucleotide-binding</keyword>
<keyword id="KW-1185">Reference proteome</keyword>
<keyword id="KW-0752">Steroid biosynthesis</keyword>
<keyword id="KW-0753">Steroid metabolism</keyword>
<keyword id="KW-0756">Sterol biosynthesis</keyword>
<keyword id="KW-1207">Sterol metabolism</keyword>
<keyword id="KW-0808">Transferase</keyword>
<reference key="1">
    <citation type="journal article" date="2005" name="Science">
        <title>The transcriptional landscape of the mammalian genome.</title>
        <authorList>
            <person name="Carninci P."/>
            <person name="Kasukawa T."/>
            <person name="Katayama S."/>
            <person name="Gough J."/>
            <person name="Frith M.C."/>
            <person name="Maeda N."/>
            <person name="Oyama R."/>
            <person name="Ravasi T."/>
            <person name="Lenhard B."/>
            <person name="Wells C."/>
            <person name="Kodzius R."/>
            <person name="Shimokawa K."/>
            <person name="Bajic V.B."/>
            <person name="Brenner S.E."/>
            <person name="Batalov S."/>
            <person name="Forrest A.R."/>
            <person name="Zavolan M."/>
            <person name="Davis M.J."/>
            <person name="Wilming L.G."/>
            <person name="Aidinis V."/>
            <person name="Allen J.E."/>
            <person name="Ambesi-Impiombato A."/>
            <person name="Apweiler R."/>
            <person name="Aturaliya R.N."/>
            <person name="Bailey T.L."/>
            <person name="Bansal M."/>
            <person name="Baxter L."/>
            <person name="Beisel K.W."/>
            <person name="Bersano T."/>
            <person name="Bono H."/>
            <person name="Chalk A.M."/>
            <person name="Chiu K.P."/>
            <person name="Choudhary V."/>
            <person name="Christoffels A."/>
            <person name="Clutterbuck D.R."/>
            <person name="Crowe M.L."/>
            <person name="Dalla E."/>
            <person name="Dalrymple B.P."/>
            <person name="de Bono B."/>
            <person name="Della Gatta G."/>
            <person name="di Bernardo D."/>
            <person name="Down T."/>
            <person name="Engstrom P."/>
            <person name="Fagiolini M."/>
            <person name="Faulkner G."/>
            <person name="Fletcher C.F."/>
            <person name="Fukushima T."/>
            <person name="Furuno M."/>
            <person name="Futaki S."/>
            <person name="Gariboldi M."/>
            <person name="Georgii-Hemming P."/>
            <person name="Gingeras T.R."/>
            <person name="Gojobori T."/>
            <person name="Green R.E."/>
            <person name="Gustincich S."/>
            <person name="Harbers M."/>
            <person name="Hayashi Y."/>
            <person name="Hensch T.K."/>
            <person name="Hirokawa N."/>
            <person name="Hill D."/>
            <person name="Huminiecki L."/>
            <person name="Iacono M."/>
            <person name="Ikeo K."/>
            <person name="Iwama A."/>
            <person name="Ishikawa T."/>
            <person name="Jakt M."/>
            <person name="Kanapin A."/>
            <person name="Katoh M."/>
            <person name="Kawasawa Y."/>
            <person name="Kelso J."/>
            <person name="Kitamura H."/>
            <person name="Kitano H."/>
            <person name="Kollias G."/>
            <person name="Krishnan S.P."/>
            <person name="Kruger A."/>
            <person name="Kummerfeld S.K."/>
            <person name="Kurochkin I.V."/>
            <person name="Lareau L.F."/>
            <person name="Lazarevic D."/>
            <person name="Lipovich L."/>
            <person name="Liu J."/>
            <person name="Liuni S."/>
            <person name="McWilliam S."/>
            <person name="Madan Babu M."/>
            <person name="Madera M."/>
            <person name="Marchionni L."/>
            <person name="Matsuda H."/>
            <person name="Matsuzawa S."/>
            <person name="Miki H."/>
            <person name="Mignone F."/>
            <person name="Miyake S."/>
            <person name="Morris K."/>
            <person name="Mottagui-Tabar S."/>
            <person name="Mulder N."/>
            <person name="Nakano N."/>
            <person name="Nakauchi H."/>
            <person name="Ng P."/>
            <person name="Nilsson R."/>
            <person name="Nishiguchi S."/>
            <person name="Nishikawa S."/>
            <person name="Nori F."/>
            <person name="Ohara O."/>
            <person name="Okazaki Y."/>
            <person name="Orlando V."/>
            <person name="Pang K.C."/>
            <person name="Pavan W.J."/>
            <person name="Pavesi G."/>
            <person name="Pesole G."/>
            <person name="Petrovsky N."/>
            <person name="Piazza S."/>
            <person name="Reed J."/>
            <person name="Reid J.F."/>
            <person name="Ring B.Z."/>
            <person name="Ringwald M."/>
            <person name="Rost B."/>
            <person name="Ruan Y."/>
            <person name="Salzberg S.L."/>
            <person name="Sandelin A."/>
            <person name="Schneider C."/>
            <person name="Schoenbach C."/>
            <person name="Sekiguchi K."/>
            <person name="Semple C.A."/>
            <person name="Seno S."/>
            <person name="Sessa L."/>
            <person name="Sheng Y."/>
            <person name="Shibata Y."/>
            <person name="Shimada H."/>
            <person name="Shimada K."/>
            <person name="Silva D."/>
            <person name="Sinclair B."/>
            <person name="Sperling S."/>
            <person name="Stupka E."/>
            <person name="Sugiura K."/>
            <person name="Sultana R."/>
            <person name="Takenaka Y."/>
            <person name="Taki K."/>
            <person name="Tammoja K."/>
            <person name="Tan S.L."/>
            <person name="Tang S."/>
            <person name="Taylor M.S."/>
            <person name="Tegner J."/>
            <person name="Teichmann S.A."/>
            <person name="Ueda H.R."/>
            <person name="van Nimwegen E."/>
            <person name="Verardo R."/>
            <person name="Wei C.L."/>
            <person name="Yagi K."/>
            <person name="Yamanishi H."/>
            <person name="Zabarovsky E."/>
            <person name="Zhu S."/>
            <person name="Zimmer A."/>
            <person name="Hide W."/>
            <person name="Bult C."/>
            <person name="Grimmond S.M."/>
            <person name="Teasdale R.D."/>
            <person name="Liu E.T."/>
            <person name="Brusic V."/>
            <person name="Quackenbush J."/>
            <person name="Wahlestedt C."/>
            <person name="Mattick J.S."/>
            <person name="Hume D.A."/>
            <person name="Kai C."/>
            <person name="Sasaki D."/>
            <person name="Tomaru Y."/>
            <person name="Fukuda S."/>
            <person name="Kanamori-Katayama M."/>
            <person name="Suzuki M."/>
            <person name="Aoki J."/>
            <person name="Arakawa T."/>
            <person name="Iida J."/>
            <person name="Imamura K."/>
            <person name="Itoh M."/>
            <person name="Kato T."/>
            <person name="Kawaji H."/>
            <person name="Kawagashira N."/>
            <person name="Kawashima T."/>
            <person name="Kojima M."/>
            <person name="Kondo S."/>
            <person name="Konno H."/>
            <person name="Nakano K."/>
            <person name="Ninomiya N."/>
            <person name="Nishio T."/>
            <person name="Okada M."/>
            <person name="Plessy C."/>
            <person name="Shibata K."/>
            <person name="Shiraki T."/>
            <person name="Suzuki S."/>
            <person name="Tagami M."/>
            <person name="Waki K."/>
            <person name="Watahiki A."/>
            <person name="Okamura-Oho Y."/>
            <person name="Suzuki H."/>
            <person name="Kawai J."/>
            <person name="Hayashizaki Y."/>
        </authorList>
    </citation>
    <scope>NUCLEOTIDE SEQUENCE [LARGE SCALE MRNA] (ISOFORMS 1 AND 2)</scope>
    <source>
        <strain>C57BL/6J</strain>
        <tissue>Embryo</tissue>
        <tissue>Hippocampus</tissue>
    </source>
</reference>
<reference key="2">
    <citation type="journal article" date="2004" name="Genome Res.">
        <title>The status, quality, and expansion of the NIH full-length cDNA project: the Mammalian Gene Collection (MGC).</title>
        <authorList>
            <consortium name="The MGC Project Team"/>
        </authorList>
    </citation>
    <scope>NUCLEOTIDE SEQUENCE [LARGE SCALE MRNA] (ISOFORM 3)</scope>
    <source>
        <tissue>Mammary gland</tissue>
    </source>
</reference>
<reference key="3">
    <citation type="journal article" date="2010" name="Cell">
        <title>A tissue-specific atlas of mouse protein phosphorylation and expression.</title>
        <authorList>
            <person name="Huttlin E.L."/>
            <person name="Jedrychowski M.P."/>
            <person name="Elias J.E."/>
            <person name="Goswami T."/>
            <person name="Rad R."/>
            <person name="Beausoleil S.A."/>
            <person name="Villen J."/>
            <person name="Haas W."/>
            <person name="Sowa M.E."/>
            <person name="Gygi S.P."/>
        </authorList>
    </citation>
    <scope>IDENTIFICATION BY MASS SPECTROMETRY [LARGE SCALE ANALYSIS]</scope>
    <source>
        <tissue>Brain</tissue>
        <tissue>Brown adipose tissue</tissue>
        <tissue>Kidney</tissue>
        <tissue>Liver</tissue>
        <tissue>Lung</tissue>
        <tissue>Pancreas</tissue>
        <tissue>Spleen</tissue>
        <tissue>Testis</tissue>
    </source>
</reference>
<evidence type="ECO:0000250" key="1">
    <source>
        <dbReference type="UniProtKB" id="Q15126"/>
    </source>
</evidence>
<evidence type="ECO:0000303" key="2">
    <source>
    </source>
</evidence>
<evidence type="ECO:0000303" key="3">
    <source>
    </source>
</evidence>
<evidence type="ECO:0000305" key="4"/>
<protein>
    <recommendedName>
        <fullName>Phosphomevalonate kinase</fullName>
        <shortName>PMKase</shortName>
        <ecNumber evidence="1">2.7.4.2</ecNumber>
    </recommendedName>
</protein>
<name>PMVK_MOUSE</name>
<proteinExistence type="evidence at protein level"/>
<gene>
    <name type="primary">Pmvk</name>
</gene>
<accession>Q9D1G2</accession>
<accession>Q8R021</accession>
<accession>Q9D6K3</accession>
<comment type="function">
    <text evidence="1">Catalyzes the reversible ATP-dependent phosphorylation of mevalonate 5-phosphate to produce mevalonate diphosphate and ADP, a key step in the mevalonic acid mediated biosynthesis of isopentenyl diphosphate and other polyisoprenoid metabolites.</text>
</comment>
<comment type="catalytic activity">
    <reaction evidence="1">
        <text>(R)-5-phosphomevalonate + ATP = (R)-5-diphosphomevalonate + ADP</text>
        <dbReference type="Rhea" id="RHEA:16341"/>
        <dbReference type="ChEBI" id="CHEBI:30616"/>
        <dbReference type="ChEBI" id="CHEBI:57557"/>
        <dbReference type="ChEBI" id="CHEBI:58146"/>
        <dbReference type="ChEBI" id="CHEBI:456216"/>
        <dbReference type="EC" id="2.7.4.2"/>
    </reaction>
    <physiologicalReaction direction="left-to-right" evidence="1">
        <dbReference type="Rhea" id="RHEA:16342"/>
    </physiologicalReaction>
    <physiologicalReaction direction="right-to-left" evidence="1">
        <dbReference type="Rhea" id="RHEA:16343"/>
    </physiologicalReaction>
</comment>
<comment type="pathway">
    <text evidence="4">Isoprenoid biosynthesis; isopentenyl diphosphate biosynthesis via mevalonate pathway; isopentenyl diphosphate from (R)-mevalonate: step 2/3.</text>
</comment>
<comment type="subunit">
    <text evidence="1">Monomer.</text>
</comment>
<comment type="subcellular location">
    <subcellularLocation>
        <location evidence="1">Cytoplasm</location>
        <location evidence="1">Cytosol</location>
    </subcellularLocation>
</comment>
<comment type="alternative products">
    <event type="alternative splicing"/>
    <isoform>
        <id>Q9D1G2-1</id>
        <name>1</name>
        <sequence type="displayed"/>
    </isoform>
    <isoform>
        <id>Q9D1G2-2</id>
        <name>2</name>
        <sequence type="described" ref="VSP_007650 VSP_007651"/>
    </isoform>
    <isoform>
        <id>Q9D1G2-3</id>
        <name>3</name>
        <sequence type="described" ref="VSP_007649"/>
    </isoform>
</comment>
<comment type="caution">
    <text evidence="1">Was originally thought to be located in the peroxisome. However, was later shown to be cytosolic.</text>
</comment>
<organism>
    <name type="scientific">Mus musculus</name>
    <name type="common">Mouse</name>
    <dbReference type="NCBI Taxonomy" id="10090"/>
    <lineage>
        <taxon>Eukaryota</taxon>
        <taxon>Metazoa</taxon>
        <taxon>Chordata</taxon>
        <taxon>Craniata</taxon>
        <taxon>Vertebrata</taxon>
        <taxon>Euteleostomi</taxon>
        <taxon>Mammalia</taxon>
        <taxon>Eutheria</taxon>
        <taxon>Euarchontoglires</taxon>
        <taxon>Glires</taxon>
        <taxon>Rodentia</taxon>
        <taxon>Myomorpha</taxon>
        <taxon>Muroidea</taxon>
        <taxon>Muridae</taxon>
        <taxon>Murinae</taxon>
        <taxon>Mus</taxon>
        <taxon>Mus</taxon>
    </lineage>
</organism>
<dbReference type="EC" id="2.7.4.2" evidence="1"/>
<dbReference type="EMBL" id="AK003607">
    <property type="protein sequence ID" value="BAB22886.1"/>
    <property type="molecule type" value="mRNA"/>
</dbReference>
<dbReference type="EMBL" id="AK013477">
    <property type="protein sequence ID" value="BAB28875.1"/>
    <property type="molecule type" value="mRNA"/>
</dbReference>
<dbReference type="EMBL" id="BC028659">
    <property type="protein sequence ID" value="AAH28659.1"/>
    <property type="molecule type" value="mRNA"/>
</dbReference>
<dbReference type="CCDS" id="CCDS17511.1">
    <molecule id="Q9D1G2-1"/>
</dbReference>
<dbReference type="CCDS" id="CCDS71270.1">
    <molecule id="Q9D1G2-2"/>
</dbReference>
<dbReference type="CCDS" id="CCDS79953.1">
    <molecule id="Q9D1G2-3"/>
</dbReference>
<dbReference type="RefSeq" id="NP_001297569.1">
    <molecule id="Q9D1G2-3"/>
    <property type="nucleotide sequence ID" value="NM_001310640.1"/>
</dbReference>
<dbReference type="RefSeq" id="NP_081060.2">
    <molecule id="Q9D1G2-1"/>
    <property type="nucleotide sequence ID" value="NM_026784.3"/>
</dbReference>
<dbReference type="RefSeq" id="NP_081624.1">
    <molecule id="Q9D1G2-2"/>
    <property type="nucleotide sequence ID" value="NM_027348.1"/>
</dbReference>
<dbReference type="RefSeq" id="XP_030108640.1">
    <molecule id="Q9D1G2-3"/>
    <property type="nucleotide sequence ID" value="XM_030252780.2"/>
</dbReference>
<dbReference type="SMR" id="Q9D1G2"/>
<dbReference type="BioGRID" id="212946">
    <property type="interactions" value="2"/>
</dbReference>
<dbReference type="FunCoup" id="Q9D1G2">
    <property type="interactions" value="845"/>
</dbReference>
<dbReference type="STRING" id="10090.ENSMUSP00000029564"/>
<dbReference type="iPTMnet" id="Q9D1G2"/>
<dbReference type="PhosphoSitePlus" id="Q9D1G2"/>
<dbReference type="PaxDb" id="10090-ENSMUSP00000029564"/>
<dbReference type="PeptideAtlas" id="Q9D1G2"/>
<dbReference type="ProteomicsDB" id="289461">
    <molecule id="Q9D1G2-1"/>
</dbReference>
<dbReference type="ProteomicsDB" id="289462">
    <molecule id="Q9D1G2-2"/>
</dbReference>
<dbReference type="ProteomicsDB" id="289463">
    <molecule id="Q9D1G2-3"/>
</dbReference>
<dbReference type="Pumba" id="Q9D1G2"/>
<dbReference type="Antibodypedia" id="34158">
    <property type="antibodies" value="244 antibodies from 28 providers"/>
</dbReference>
<dbReference type="DNASU" id="68603"/>
<dbReference type="Ensembl" id="ENSMUST00000029564.12">
    <molecule id="Q9D1G2-1"/>
    <property type="protein sequence ID" value="ENSMUSP00000029564.6"/>
    <property type="gene ID" value="ENSMUSG00000027952.17"/>
</dbReference>
<dbReference type="Ensembl" id="ENSMUST00000184515.2">
    <molecule id="Q9D1G2-2"/>
    <property type="protein sequence ID" value="ENSMUSP00000139116.2"/>
    <property type="gene ID" value="ENSMUSG00000027952.17"/>
</dbReference>
<dbReference type="Ensembl" id="ENSMUST00000198440.5">
    <molecule id="Q9D1G2-3"/>
    <property type="protein sequence ID" value="ENSMUSP00000143154.2"/>
    <property type="gene ID" value="ENSMUSG00000027952.17"/>
</dbReference>
<dbReference type="GeneID" id="68603"/>
<dbReference type="KEGG" id="mmu:68603"/>
<dbReference type="UCSC" id="uc008pzs.2">
    <molecule id="Q9D1G2-1"/>
    <property type="organism name" value="mouse"/>
</dbReference>
<dbReference type="UCSC" id="uc012csn.1">
    <molecule id="Q9D1G2-2"/>
    <property type="organism name" value="mouse"/>
</dbReference>
<dbReference type="AGR" id="MGI:1915853"/>
<dbReference type="CTD" id="10654"/>
<dbReference type="MGI" id="MGI:1915853">
    <property type="gene designation" value="Pmvk"/>
</dbReference>
<dbReference type="VEuPathDB" id="HostDB:ENSMUSG00000027952"/>
<dbReference type="eggNOG" id="ENOG502QYPQ">
    <property type="taxonomic scope" value="Eukaryota"/>
</dbReference>
<dbReference type="GeneTree" id="ENSGT00390000014801"/>
<dbReference type="HOGENOM" id="CLU_092097_0_0_1"/>
<dbReference type="InParanoid" id="Q9D1G2"/>
<dbReference type="OMA" id="YGFFCRA"/>
<dbReference type="OrthoDB" id="2401875at2759"/>
<dbReference type="PhylomeDB" id="Q9D1G2"/>
<dbReference type="TreeFam" id="TF312935"/>
<dbReference type="Reactome" id="R-MMU-191273">
    <property type="pathway name" value="Cholesterol biosynthesis"/>
</dbReference>
<dbReference type="UniPathway" id="UPA00057">
    <property type="reaction ID" value="UER00099"/>
</dbReference>
<dbReference type="BioGRID-ORCS" id="68603">
    <property type="hits" value="26 hits in 77 CRISPR screens"/>
</dbReference>
<dbReference type="ChiTaRS" id="Pmvk">
    <property type="organism name" value="mouse"/>
</dbReference>
<dbReference type="PRO" id="PR:Q9D1G2"/>
<dbReference type="Proteomes" id="UP000000589">
    <property type="component" value="Chromosome 3"/>
</dbReference>
<dbReference type="RNAct" id="Q9D1G2">
    <property type="molecule type" value="protein"/>
</dbReference>
<dbReference type="Bgee" id="ENSMUSG00000027952">
    <property type="expression patterns" value="Expressed in bone fossa and 256 other cell types or tissues"/>
</dbReference>
<dbReference type="ExpressionAtlas" id="Q9D1G2">
    <property type="expression patterns" value="baseline and differential"/>
</dbReference>
<dbReference type="GO" id="GO:0005829">
    <property type="term" value="C:cytosol"/>
    <property type="evidence" value="ECO:0000250"/>
    <property type="project" value="UniProtKB"/>
</dbReference>
<dbReference type="GO" id="GO:0005524">
    <property type="term" value="F:ATP binding"/>
    <property type="evidence" value="ECO:0007669"/>
    <property type="project" value="UniProtKB-KW"/>
</dbReference>
<dbReference type="GO" id="GO:0004631">
    <property type="term" value="F:phosphomevalonate kinase activity"/>
    <property type="evidence" value="ECO:0000314"/>
    <property type="project" value="MGI"/>
</dbReference>
<dbReference type="GO" id="GO:0006695">
    <property type="term" value="P:cholesterol biosynthetic process"/>
    <property type="evidence" value="ECO:0007669"/>
    <property type="project" value="UniProtKB-KW"/>
</dbReference>
<dbReference type="GO" id="GO:0019287">
    <property type="term" value="P:isopentenyl diphosphate biosynthetic process, mevalonate pathway"/>
    <property type="evidence" value="ECO:0007669"/>
    <property type="project" value="UniProtKB-UniPathway"/>
</dbReference>
<dbReference type="GO" id="GO:0070723">
    <property type="term" value="P:response to cholesterol"/>
    <property type="evidence" value="ECO:0007669"/>
    <property type="project" value="Ensembl"/>
</dbReference>
<dbReference type="FunFam" id="3.40.50.300:FF:001026">
    <property type="entry name" value="Phosphomevalonate kinase"/>
    <property type="match status" value="1"/>
</dbReference>
<dbReference type="Gene3D" id="3.40.50.300">
    <property type="entry name" value="P-loop containing nucleotide triphosphate hydrolases"/>
    <property type="match status" value="1"/>
</dbReference>
<dbReference type="InterPro" id="IPR027417">
    <property type="entry name" value="P-loop_NTPase"/>
</dbReference>
<dbReference type="InterPro" id="IPR005919">
    <property type="entry name" value="Pmev_kin_anim"/>
</dbReference>
<dbReference type="NCBIfam" id="TIGR01223">
    <property type="entry name" value="Pmev_kin_anim"/>
    <property type="match status" value="1"/>
</dbReference>
<dbReference type="PANTHER" id="PTHR13101">
    <property type="entry name" value="PHOSPHOMEVALONATE KINASE"/>
    <property type="match status" value="1"/>
</dbReference>
<dbReference type="PANTHER" id="PTHR13101:SF1">
    <property type="entry name" value="PHOSPHOMEVALONATE KINASE"/>
    <property type="match status" value="1"/>
</dbReference>
<dbReference type="Pfam" id="PF04275">
    <property type="entry name" value="P-mevalo_kinase"/>
    <property type="match status" value="1"/>
</dbReference>
<dbReference type="PIRSF" id="PIRSF036639">
    <property type="entry name" value="PMK_anim"/>
    <property type="match status" value="1"/>
</dbReference>
<dbReference type="SUPFAM" id="SSF52540">
    <property type="entry name" value="P-loop containing nucleoside triphosphate hydrolases"/>
    <property type="match status" value="1"/>
</dbReference>
<feature type="chain" id="PRO_0000058473" description="Phosphomevalonate kinase">
    <location>
        <begin position="1"/>
        <end position="192"/>
    </location>
</feature>
<feature type="binding site" evidence="1">
    <location>
        <begin position="17"/>
        <end position="23"/>
    </location>
    <ligand>
        <name>ATP</name>
        <dbReference type="ChEBI" id="CHEBI:30616"/>
    </ligand>
</feature>
<feature type="binding site" evidence="1">
    <location>
        <position position="141"/>
    </location>
    <ligand>
        <name>ATP</name>
        <dbReference type="ChEBI" id="CHEBI:30616"/>
    </ligand>
</feature>
<feature type="binding site" evidence="1">
    <location>
        <position position="170"/>
    </location>
    <ligand>
        <name>substrate</name>
    </ligand>
</feature>
<feature type="binding site" evidence="1">
    <location>
        <position position="171"/>
    </location>
    <ligand>
        <name>ATP</name>
        <dbReference type="ChEBI" id="CHEBI:30616"/>
    </ligand>
</feature>
<feature type="binding site" evidence="1">
    <location>
        <position position="180"/>
    </location>
    <ligand>
        <name>ATP</name>
        <dbReference type="ChEBI" id="CHEBI:30616"/>
    </ligand>
</feature>
<feature type="splice variant" id="VSP_007649" description="In isoform 3." evidence="2">
    <location>
        <begin position="1"/>
        <end position="75"/>
    </location>
</feature>
<feature type="splice variant" id="VSP_007650" description="In isoform 2." evidence="3">
    <location>
        <begin position="1"/>
        <end position="21"/>
    </location>
</feature>
<feature type="splice variant" id="VSP_007651" description="In isoform 2." evidence="3">
    <original>KDFVTERLKS</original>
    <variation>MAGIYGIFYA</variation>
    <location>
        <begin position="22"/>
        <end position="31"/>
    </location>
</feature>
<feature type="sequence conflict" description="In Ref. 1; BAB22886." evidence="4" ref="1">
    <original>P</original>
    <variation>L</variation>
    <location>
        <position position="147"/>
    </location>
</feature>
<sequence>MAPLGASPRLVLLFSGKRKSGKDFVTERLKSRLGGNICALLRLSGPLKEEYAREHGLDFQRLLDASTYKETYRRDMICWGEQKRQADPGFFCRKIVEGVSQPIWLVSDTRRTSDIQWFQEAYGAVIQTVRVVASEQSRQQRGWVFTPGVDDAESECGLDNFGNFDWVIENHGDEQCLEDQLEHLLGFIQAKL</sequence>